<feature type="chain" id="PRO_0000382989" description="Probable 4-amino-4-deoxy-L-arabinose-phosphoundecaprenol flippase subunit ArnE">
    <location>
        <begin position="1"/>
        <end position="108"/>
    </location>
</feature>
<feature type="transmembrane region" description="Helical" evidence="1">
    <location>
        <begin position="36"/>
        <end position="56"/>
    </location>
</feature>
<feature type="transmembrane region" description="Helical" evidence="1">
    <location>
        <begin position="58"/>
        <end position="78"/>
    </location>
</feature>
<feature type="transmembrane region" description="Helical" evidence="1">
    <location>
        <begin position="85"/>
        <end position="105"/>
    </location>
</feature>
<gene>
    <name evidence="1" type="primary">arnE</name>
    <name type="ordered locus">Psyr_2694</name>
</gene>
<proteinExistence type="inferred from homology"/>
<reference key="1">
    <citation type="journal article" date="2005" name="Proc. Natl. Acad. Sci. U.S.A.">
        <title>Comparison of the complete genome sequences of Pseudomonas syringae pv. syringae B728a and pv. tomato DC3000.</title>
        <authorList>
            <person name="Feil H."/>
            <person name="Feil W.S."/>
            <person name="Chain P."/>
            <person name="Larimer F."/>
            <person name="Dibartolo G."/>
            <person name="Copeland A."/>
            <person name="Lykidis A."/>
            <person name="Trong S."/>
            <person name="Nolan M."/>
            <person name="Goltsman E."/>
            <person name="Thiel J."/>
            <person name="Malfatti S."/>
            <person name="Loper J.E."/>
            <person name="Lapidus A."/>
            <person name="Detter J.C."/>
            <person name="Land M."/>
            <person name="Richardson P.M."/>
            <person name="Kyrpides N.C."/>
            <person name="Ivanova N."/>
            <person name="Lindow S.E."/>
        </authorList>
    </citation>
    <scope>NUCLEOTIDE SEQUENCE [LARGE SCALE GENOMIC DNA]</scope>
    <source>
        <strain>B728a</strain>
    </source>
</reference>
<protein>
    <recommendedName>
        <fullName evidence="1">Probable 4-amino-4-deoxy-L-arabinose-phosphoundecaprenol flippase subunit ArnE</fullName>
        <shortName evidence="1">L-Ara4N-phosphoundecaprenol flippase subunit ArnE</shortName>
    </recommendedName>
    <alternativeName>
        <fullName evidence="1">Undecaprenyl phosphate-aminoarabinose flippase subunit ArnE</fullName>
    </alternativeName>
</protein>
<name>ARNE_PSEU2</name>
<evidence type="ECO:0000255" key="1">
    <source>
        <dbReference type="HAMAP-Rule" id="MF_01869"/>
    </source>
</evidence>
<comment type="function">
    <text evidence="1">Translocates 4-amino-4-deoxy-L-arabinose-phosphoundecaprenol (alpha-L-Ara4N-phosphoundecaprenol) from the cytoplasmic to the periplasmic side of the inner membrane.</text>
</comment>
<comment type="pathway">
    <text evidence="1">Bacterial outer membrane biogenesis; lipopolysaccharide biosynthesis.</text>
</comment>
<comment type="subunit">
    <text evidence="1">Heterodimer of ArnE and ArnF.</text>
</comment>
<comment type="subcellular location">
    <subcellularLocation>
        <location evidence="1">Cell inner membrane</location>
        <topology evidence="1">Multi-pass membrane protein</topology>
    </subcellularLocation>
</comment>
<comment type="similarity">
    <text evidence="1">Belongs to the ArnE family.</text>
</comment>
<accession>Q4ZSY9</accession>
<sequence>MLASACLLTCLGQIAQKYAVQGWRGAFPGVFAALRSLWLALACLGSGLLIWLLVLQRLDVGIAYPMLGVNFVLITLAGRYVFNEPVDVRHWLGIALILVGVFQLGRQA</sequence>
<dbReference type="EMBL" id="CP000075">
    <property type="protein sequence ID" value="AAY37733.1"/>
    <property type="molecule type" value="Genomic_DNA"/>
</dbReference>
<dbReference type="RefSeq" id="YP_235771.1">
    <property type="nucleotide sequence ID" value="NC_007005.1"/>
</dbReference>
<dbReference type="SMR" id="Q4ZSY9"/>
<dbReference type="STRING" id="205918.Psyr_2694"/>
<dbReference type="KEGG" id="psb:Psyr_2694"/>
<dbReference type="PATRIC" id="fig|205918.7.peg.2754"/>
<dbReference type="eggNOG" id="COG2076">
    <property type="taxonomic scope" value="Bacteria"/>
</dbReference>
<dbReference type="HOGENOM" id="CLU_131462_5_1_6"/>
<dbReference type="OrthoDB" id="6058674at2"/>
<dbReference type="UniPathway" id="UPA00030"/>
<dbReference type="Proteomes" id="UP000000426">
    <property type="component" value="Chromosome"/>
</dbReference>
<dbReference type="GO" id="GO:0005886">
    <property type="term" value="C:plasma membrane"/>
    <property type="evidence" value="ECO:0007669"/>
    <property type="project" value="UniProtKB-SubCell"/>
</dbReference>
<dbReference type="GO" id="GO:1901505">
    <property type="term" value="F:carbohydrate derivative transmembrane transporter activity"/>
    <property type="evidence" value="ECO:0007669"/>
    <property type="project" value="InterPro"/>
</dbReference>
<dbReference type="GO" id="GO:0009245">
    <property type="term" value="P:lipid A biosynthetic process"/>
    <property type="evidence" value="ECO:0007669"/>
    <property type="project" value="UniProtKB-UniRule"/>
</dbReference>
<dbReference type="GO" id="GO:0009103">
    <property type="term" value="P:lipopolysaccharide biosynthetic process"/>
    <property type="evidence" value="ECO:0007669"/>
    <property type="project" value="UniProtKB-UniRule"/>
</dbReference>
<dbReference type="Gene3D" id="1.10.3730.20">
    <property type="match status" value="1"/>
</dbReference>
<dbReference type="HAMAP" id="MF_01869">
    <property type="entry name" value="Flippase_ArnE"/>
    <property type="match status" value="1"/>
</dbReference>
<dbReference type="InterPro" id="IPR000620">
    <property type="entry name" value="EamA_dom"/>
</dbReference>
<dbReference type="InterPro" id="IPR022883">
    <property type="entry name" value="Flippase_ArnE"/>
</dbReference>
<dbReference type="InterPro" id="IPR000390">
    <property type="entry name" value="Small_drug/metabolite_transptr"/>
</dbReference>
<dbReference type="NCBIfam" id="NF011625">
    <property type="entry name" value="PRK15051.1"/>
    <property type="match status" value="1"/>
</dbReference>
<dbReference type="PANTHER" id="PTHR30561:SF23">
    <property type="entry name" value="4-AMINO-4-DEOXY-L-ARABINOSE-PHOSPHOUNDECAPRENOL FLIPPASE SUBUNIT ARNE-RELATED"/>
    <property type="match status" value="1"/>
</dbReference>
<dbReference type="PANTHER" id="PTHR30561">
    <property type="entry name" value="SMR FAMILY PROTON-DEPENDENT DRUG EFFLUX TRANSPORTER SUGE"/>
    <property type="match status" value="1"/>
</dbReference>
<dbReference type="Pfam" id="PF00892">
    <property type="entry name" value="EamA"/>
    <property type="match status" value="1"/>
</dbReference>
<dbReference type="SUPFAM" id="SSF103481">
    <property type="entry name" value="Multidrug resistance efflux transporter EmrE"/>
    <property type="match status" value="1"/>
</dbReference>
<keyword id="KW-0997">Cell inner membrane</keyword>
<keyword id="KW-1003">Cell membrane</keyword>
<keyword id="KW-0441">Lipid A biosynthesis</keyword>
<keyword id="KW-0444">Lipid biosynthesis</keyword>
<keyword id="KW-0443">Lipid metabolism</keyword>
<keyword id="KW-0448">Lipopolysaccharide biosynthesis</keyword>
<keyword id="KW-0472">Membrane</keyword>
<keyword id="KW-0812">Transmembrane</keyword>
<keyword id="KW-1133">Transmembrane helix</keyword>
<keyword id="KW-0813">Transport</keyword>
<organism>
    <name type="scientific">Pseudomonas syringae pv. syringae (strain B728a)</name>
    <dbReference type="NCBI Taxonomy" id="205918"/>
    <lineage>
        <taxon>Bacteria</taxon>
        <taxon>Pseudomonadati</taxon>
        <taxon>Pseudomonadota</taxon>
        <taxon>Gammaproteobacteria</taxon>
        <taxon>Pseudomonadales</taxon>
        <taxon>Pseudomonadaceae</taxon>
        <taxon>Pseudomonas</taxon>
        <taxon>Pseudomonas syringae</taxon>
    </lineage>
</organism>